<keyword id="KW-0007">Acetylation</keyword>
<keyword id="KW-0963">Cytoplasm</keyword>
<keyword id="KW-0256">Endoplasmic reticulum</keyword>
<keyword id="KW-0378">Hydrolase</keyword>
<keyword id="KW-0391">Immunity</keyword>
<keyword id="KW-0395">Inflammatory response</keyword>
<keyword id="KW-0399">Innate immunity</keyword>
<keyword id="KW-0479">Metal-binding</keyword>
<keyword id="KW-0539">Nucleus</keyword>
<keyword id="KW-0576">Peroxisome</keyword>
<keyword id="KW-0597">Phosphoprotein</keyword>
<keyword id="KW-1267">Proteomics identification</keyword>
<keyword id="KW-1185">Reference proteome</keyword>
<keyword id="KW-0808">Transferase</keyword>
<keyword id="KW-0862">Zinc</keyword>
<comment type="function">
    <text evidence="7 8 12 13">Purine nucleoside enzyme that catalyzes the phosphorolysis of adenosine, guanosine and inosine nucleosides, yielding D-ribose 1-phosphate and the respective free bases, adenine, guanine and hypoxanthine (PubMed:31978345). Also catalyzes the phosphorolysis of S-methyl-5'-thioadenosine into adenine and S-methyl-5-thio-alpha-D-ribose 1-phosphate (PubMed:31978345). Also has adenosine deaminase activity (PubMed:31978345). Acts as a regulator of innate immunity in macrophages by modulating the purine nucleotide metabolism, thereby regulating the metabolic function and bioenergetic state of macrophages (PubMed:31978345). Enables a purine nucleotide cycle between adenosine and inosine monophosphate and adenylosuccinate that prevents cytoplasmic acidification and balances the cytoplasmic-mitochondrial redox interface (PubMed:31978345). The purine nucleotide cycle consumes aspartate and releases fumarate in a manner involving fatty acid oxidation and ATP-citrate lyase activity (PubMed:31978345). Participates in pattern recognition receptor (PRR)-induced cytokines in macrophages: associates with the NOD2-signaling complex and promotes optimal NOD2-induced signaling, cytokine secretion and bacterial clearance (PubMed:28593945, PubMed:31875558). Localizes to the endoplasmic reticulum upon PRR stimulation of macrophages and associates with endoplasmic reticulum-stress sensors, promoting the endoplasmic reticulum unfolded protein response (UPR) (PubMed:31875558). Does not show laccase activity (PubMed:27959965, PubMed:31978345).</text>
</comment>
<comment type="catalytic activity">
    <reaction evidence="13">
        <text>adenosine + phosphate = alpha-D-ribose 1-phosphate + adenine</text>
        <dbReference type="Rhea" id="RHEA:27642"/>
        <dbReference type="ChEBI" id="CHEBI:16335"/>
        <dbReference type="ChEBI" id="CHEBI:16708"/>
        <dbReference type="ChEBI" id="CHEBI:43474"/>
        <dbReference type="ChEBI" id="CHEBI:57720"/>
        <dbReference type="EC" id="2.4.2.1"/>
    </reaction>
    <physiologicalReaction direction="left-to-right" evidence="13">
        <dbReference type="Rhea" id="RHEA:27643"/>
    </physiologicalReaction>
</comment>
<comment type="catalytic activity">
    <reaction evidence="13">
        <text>inosine + phosphate = alpha-D-ribose 1-phosphate + hypoxanthine</text>
        <dbReference type="Rhea" id="RHEA:27646"/>
        <dbReference type="ChEBI" id="CHEBI:17368"/>
        <dbReference type="ChEBI" id="CHEBI:17596"/>
        <dbReference type="ChEBI" id="CHEBI:43474"/>
        <dbReference type="ChEBI" id="CHEBI:57720"/>
        <dbReference type="EC" id="2.4.2.1"/>
    </reaction>
    <physiologicalReaction direction="left-to-right" evidence="13">
        <dbReference type="Rhea" id="RHEA:27647"/>
    </physiologicalReaction>
</comment>
<comment type="catalytic activity">
    <reaction evidence="13">
        <text>guanosine + phosphate = alpha-D-ribose 1-phosphate + guanine</text>
        <dbReference type="Rhea" id="RHEA:13233"/>
        <dbReference type="ChEBI" id="CHEBI:16235"/>
        <dbReference type="ChEBI" id="CHEBI:16750"/>
        <dbReference type="ChEBI" id="CHEBI:43474"/>
        <dbReference type="ChEBI" id="CHEBI:57720"/>
        <dbReference type="EC" id="2.4.2.1"/>
    </reaction>
    <physiologicalReaction direction="left-to-right" evidence="13">
        <dbReference type="Rhea" id="RHEA:13234"/>
    </physiologicalReaction>
</comment>
<comment type="catalytic activity">
    <reaction evidence="13">
        <text>S-methyl-5'-thioadenosine + phosphate = 5-(methylsulfanyl)-alpha-D-ribose 1-phosphate + adenine</text>
        <dbReference type="Rhea" id="RHEA:11852"/>
        <dbReference type="ChEBI" id="CHEBI:16708"/>
        <dbReference type="ChEBI" id="CHEBI:17509"/>
        <dbReference type="ChEBI" id="CHEBI:43474"/>
        <dbReference type="ChEBI" id="CHEBI:58533"/>
        <dbReference type="EC" id="2.4.2.28"/>
    </reaction>
    <physiologicalReaction direction="left-to-right" evidence="13">
        <dbReference type="Rhea" id="RHEA:11853"/>
    </physiologicalReaction>
</comment>
<comment type="catalytic activity">
    <reaction evidence="13">
        <text>adenosine + H2O + H(+) = inosine + NH4(+)</text>
        <dbReference type="Rhea" id="RHEA:24408"/>
        <dbReference type="ChEBI" id="CHEBI:15377"/>
        <dbReference type="ChEBI" id="CHEBI:15378"/>
        <dbReference type="ChEBI" id="CHEBI:16335"/>
        <dbReference type="ChEBI" id="CHEBI:17596"/>
        <dbReference type="ChEBI" id="CHEBI:28938"/>
        <dbReference type="EC" id="3.5.4.4"/>
    </reaction>
    <physiologicalReaction direction="left-to-right" evidence="13">
        <dbReference type="Rhea" id="RHEA:24409"/>
    </physiologicalReaction>
</comment>
<comment type="biophysicochemical properties">
    <kinetics>
        <KM evidence="13">36 uM for adenosine (for adenosine phosphorylase activity)</KM>
        <KM evidence="13">11 uM for adenosine (for adenosine deaminase activity)</KM>
        <KM evidence="13">41 uM for inosine</KM>
        <KM evidence="13">1 uM for S-methyl-5'-thioadenosine</KM>
        <Vmax evidence="13">4409.0 pmol/min/mg enzyme with adenosine as substrate (for adenosine phosphorylase activity)</Vmax>
        <Vmax evidence="13">541.0 pmol/min/mg enzyme with adenosine as substrate (for adenosine deaminase activity)</Vmax>
        <Vmax evidence="13">4187.0 pmol/min/mg enzyme with inosine as substrate</Vmax>
        <Vmax evidence="13">2639.0 pmol/min/mg enzyme with S-methyl-5'-thioadenosine as substrate</Vmax>
    </kinetics>
</comment>
<comment type="subunit">
    <text evidence="5 8 12">Interacts with FASN (PubMed:27478939). Interacts with SDHA (PubMed:28593945). Interacts with ATF6, EIF2AK3 and ERN1 (PubMed:31875558).</text>
</comment>
<comment type="interaction">
    <interactant intactId="EBI-12508070">
        <id>Q8IV20</id>
    </interactant>
    <interactant intactId="EBI-356658">
        <id>P49327</id>
        <label>FASN</label>
    </interactant>
    <organismsDiffer>false</organismsDiffer>
    <experiments>8</experiments>
</comment>
<comment type="interaction">
    <interactant intactId="EBI-12508070">
        <id>Q8IV20</id>
    </interactant>
    <interactant intactId="EBI-374889">
        <id>O43929</id>
        <label>ORC4</label>
    </interactant>
    <organismsDiffer>false</organismsDiffer>
    <experiments>2</experiments>
</comment>
<comment type="interaction">
    <interactant intactId="EBI-12508070">
        <id>Q8IV20</id>
    </interactant>
    <interactant intactId="EBI-2872222">
        <id>Q9NX31</id>
        <label>OSER1</label>
    </interactant>
    <organismsDiffer>false</organismsDiffer>
    <experiments>4</experiments>
</comment>
<comment type="interaction">
    <interactant intactId="EBI-12508070">
        <id>Q8IV20</id>
    </interactant>
    <interactant intactId="EBI-52361274">
        <id>Q40772</id>
        <label>PAP2</label>
    </interactant>
    <organismsDiffer>true</organismsDiffer>
    <experiments>4</experiments>
</comment>
<comment type="subcellular location">
    <subcellularLocation>
        <location evidence="2">Cytoplasm</location>
    </subcellularLocation>
    <subcellularLocation>
        <location evidence="2">Nucleus</location>
    </subcellularLocation>
    <subcellularLocation>
        <location evidence="12">Endoplasmic reticulum</location>
    </subcellularLocation>
    <subcellularLocation>
        <location evidence="5 7">Peroxisome</location>
    </subcellularLocation>
    <text evidence="12">Upon stimulation of the pattern-recognition receptor (PRR) NOD2, localizes to the endoplasmic reticulum.</text>
</comment>
<comment type="tissue specificity">
    <text evidence="7 8">Ubiquitously expressed, with higher expression levels in immune-related tissues such as lymph nodes and spleen (PubMed:27959965). Expressed in both intestinal and peripheral myeloid-derived cells (PubMed:28593945).</text>
</comment>
<comment type="induction">
    <text evidence="7 8">Up-regulated by phorbol 12-myristate 13-acetate (PMA) (PubMed:27959965). Down-regulated by PPAR ligands (PubMed:27959965). Up-regulated upon pattern recognition receptor (PRR) stimulation (PubMed:28593945).</text>
</comment>
<comment type="PTM">
    <text evidence="8">Phosphorylated on tyrosine residues.</text>
</comment>
<comment type="disease" evidence="4 6 9 10 11 12">
    <disease id="DI-05771">
        <name>Juvenile arthritis</name>
        <acronym>JUVAR</acronym>
        <description>A rare, familial form of juvenile arthritis characterized by autosomal recessive inheritance and onset in early childhood of symmetric, chronic joint inflammation. It causes joint swelling, pain, stiffness and restricted joint movement. JUVAR has high clinical variability. Some patients exhibit systemic symptoms, including quotidian fever, erythematous rash, generalized lymphadenopathy, hepatomegaly, and/or splenomegaly. Others display polyarthritis without systemic inflammation.</description>
        <dbReference type="MIM" id="618795"/>
    </disease>
    <text>The disease is caused by variants affecting the gene represented in this entry.</text>
</comment>
<comment type="similarity">
    <text evidence="17">Belongs to the purine nucleoside phosphorylase YfiH/LACC1 family.</text>
</comment>
<protein>
    <recommendedName>
        <fullName evidence="17">Purine nucleoside phosphorylase LACC1</fullName>
        <ecNumber evidence="13">2.4.2.1</ecNumber>
    </recommendedName>
    <alternativeName>
        <fullName evidence="17">Adenosine deaminase LACC1</fullName>
        <ecNumber evidence="13">3.5.4.4</ecNumber>
    </alternativeName>
    <alternativeName>
        <fullName evidence="15 16">Fatty acid metabolism-immunity nexus</fullName>
    </alternativeName>
    <alternativeName>
        <fullName evidence="17">Guanosine phosphorylase LACC1</fullName>
    </alternativeName>
    <alternativeName>
        <fullName evidence="17">Laccase domain-containing protein 1</fullName>
    </alternativeName>
    <alternativeName>
        <fullName evidence="17">S-methyl-5'-thioadenosine phosphorylase LACC1</fullName>
        <ecNumber evidence="13">2.4.2.28</ecNumber>
    </alternativeName>
</protein>
<gene>
    <name evidence="14 19" type="primary">LACC1</name>
    <name evidence="19" type="synonym">C13orf31</name>
    <name evidence="15 16" type="synonym">FAMIN</name>
</gene>
<accession>Q8IV20</accession>
<accession>A2A3Z6</accession>
<accession>Q8N8X5</accession>
<sequence length="430" mass="47780">MAEAVLIDLFGLKLNSQKNCHQTLLKTLNAVQYHHAAKAKFLCIMCCSNISYERDGEQDNCEIETSNGLSALLEEFEIVSCPSMAATLYTIKQKIDEKNLSSIKVIVPRHRKTLMKAFIDQLFTDVYNFEFEDLQVTFRGGLFKQSIEINVITAQELRGIQNEIETFLRSLPALRGKLTIITSSLIPDIFIHGFTTRTGGISYIPTLSSFNLFSSSKRRDPKVVVQENLRRLANAAGFNVEKFYRIKTHHSNDIWIMGRKEPDSYDGITTNQRGVTIAALGADCIPIVFADPVKKACGVAHAGWKGTLLGVAMATVNAMIAEYGCSLEDIVVVLGPSVGPCCFTLPRESAEAFHNLHPACVQLFDSPNPCIDIRKATRILLEQGGILPQNIQDQNQDLNLCTSCHPDKFFSHVRDGLNFGTQIGFISIKE</sequence>
<name>LACC1_HUMAN</name>
<dbReference type="EC" id="2.4.2.1" evidence="13"/>
<dbReference type="EC" id="3.5.4.4" evidence="13"/>
<dbReference type="EC" id="2.4.2.28" evidence="13"/>
<dbReference type="EMBL" id="AK096044">
    <property type="protein sequence ID" value="BAC04686.1"/>
    <property type="molecule type" value="mRNA"/>
</dbReference>
<dbReference type="EMBL" id="AL512506">
    <property type="status" value="NOT_ANNOTATED_CDS"/>
    <property type="molecule type" value="Genomic_DNA"/>
</dbReference>
<dbReference type="EMBL" id="CH471075">
    <property type="protein sequence ID" value="EAX08701.1"/>
    <property type="molecule type" value="Genomic_DNA"/>
</dbReference>
<dbReference type="EMBL" id="BC035749">
    <property type="protein sequence ID" value="AAH35749.1"/>
    <property type="molecule type" value="mRNA"/>
</dbReference>
<dbReference type="CCDS" id="CCDS9391.1"/>
<dbReference type="RefSeq" id="NP_001121775.1">
    <property type="nucleotide sequence ID" value="NM_001128303.2"/>
</dbReference>
<dbReference type="RefSeq" id="NP_001337567.1">
    <property type="nucleotide sequence ID" value="NM_001350638.2"/>
</dbReference>
<dbReference type="RefSeq" id="NP_001337568.1">
    <property type="nucleotide sequence ID" value="NM_001350639.2"/>
</dbReference>
<dbReference type="RefSeq" id="NP_001337569.1">
    <property type="nucleotide sequence ID" value="NM_001350640.2"/>
</dbReference>
<dbReference type="RefSeq" id="NP_001337570.1">
    <property type="nucleotide sequence ID" value="NM_001350641.2"/>
</dbReference>
<dbReference type="RefSeq" id="NP_001337571.1">
    <property type="nucleotide sequence ID" value="NM_001350642.2"/>
</dbReference>
<dbReference type="RefSeq" id="NP_694950.2">
    <property type="nucleotide sequence ID" value="NM_153218.4"/>
</dbReference>
<dbReference type="RefSeq" id="XP_005266318.1">
    <property type="nucleotide sequence ID" value="XM_005266261.3"/>
</dbReference>
<dbReference type="RefSeq" id="XP_006719829.1">
    <property type="nucleotide sequence ID" value="XM_006719766.3"/>
</dbReference>
<dbReference type="RefSeq" id="XP_011533235.1">
    <property type="nucleotide sequence ID" value="XM_011534933.2"/>
</dbReference>
<dbReference type="RefSeq" id="XP_011533236.1">
    <property type="nucleotide sequence ID" value="XM_011534934.2"/>
</dbReference>
<dbReference type="RefSeq" id="XP_016875883.1">
    <property type="nucleotide sequence ID" value="XM_017020394.1"/>
</dbReference>
<dbReference type="RefSeq" id="XP_047286055.1">
    <property type="nucleotide sequence ID" value="XM_047430099.1"/>
</dbReference>
<dbReference type="RefSeq" id="XP_047286056.1">
    <property type="nucleotide sequence ID" value="XM_047430100.1"/>
</dbReference>
<dbReference type="SMR" id="Q8IV20"/>
<dbReference type="BioGRID" id="126879">
    <property type="interactions" value="48"/>
</dbReference>
<dbReference type="FunCoup" id="Q8IV20">
    <property type="interactions" value="699"/>
</dbReference>
<dbReference type="IntAct" id="Q8IV20">
    <property type="interactions" value="71"/>
</dbReference>
<dbReference type="MINT" id="Q8IV20"/>
<dbReference type="STRING" id="9606.ENSP00000391747"/>
<dbReference type="GlyGen" id="Q8IV20">
    <property type="glycosylation" value="1 site, 1 O-linked glycan (1 site)"/>
</dbReference>
<dbReference type="iPTMnet" id="Q8IV20"/>
<dbReference type="PhosphoSitePlus" id="Q8IV20"/>
<dbReference type="BioMuta" id="LACC1"/>
<dbReference type="DMDM" id="32171848"/>
<dbReference type="jPOST" id="Q8IV20"/>
<dbReference type="MassIVE" id="Q8IV20"/>
<dbReference type="PaxDb" id="9606-ENSP00000391747"/>
<dbReference type="PeptideAtlas" id="Q8IV20"/>
<dbReference type="ProteomicsDB" id="70644"/>
<dbReference type="Pumba" id="Q8IV20"/>
<dbReference type="Antibodypedia" id="23539">
    <property type="antibodies" value="67 antibodies from 18 providers"/>
</dbReference>
<dbReference type="DNASU" id="144811"/>
<dbReference type="Ensembl" id="ENST00000325686.7">
    <property type="protein sequence ID" value="ENSP00000317619.5"/>
    <property type="gene ID" value="ENSG00000179630.11"/>
</dbReference>
<dbReference type="Ensembl" id="ENST00000441843.5">
    <property type="protein sequence ID" value="ENSP00000391747.1"/>
    <property type="gene ID" value="ENSG00000179630.11"/>
</dbReference>
<dbReference type="GeneID" id="144811"/>
<dbReference type="KEGG" id="hsa:144811"/>
<dbReference type="MANE-Select" id="ENST00000325686.7">
    <property type="protein sequence ID" value="ENSP00000317619.5"/>
    <property type="RefSeq nucleotide sequence ID" value="NM_153218.4"/>
    <property type="RefSeq protein sequence ID" value="NP_694950.2"/>
</dbReference>
<dbReference type="UCSC" id="uc001uzf.4">
    <property type="organism name" value="human"/>
</dbReference>
<dbReference type="AGR" id="HGNC:26789"/>
<dbReference type="CTD" id="144811"/>
<dbReference type="DisGeNET" id="144811"/>
<dbReference type="GeneCards" id="LACC1"/>
<dbReference type="HGNC" id="HGNC:26789">
    <property type="gene designation" value="LACC1"/>
</dbReference>
<dbReference type="HPA" id="ENSG00000179630">
    <property type="expression patterns" value="Low tissue specificity"/>
</dbReference>
<dbReference type="MalaCards" id="LACC1"/>
<dbReference type="MIM" id="604302">
    <property type="type" value="phenotype"/>
</dbReference>
<dbReference type="MIM" id="613409">
    <property type="type" value="gene"/>
</dbReference>
<dbReference type="MIM" id="618795">
    <property type="type" value="phenotype"/>
</dbReference>
<dbReference type="neXtProt" id="NX_Q8IV20"/>
<dbReference type="OpenTargets" id="ENSG00000179630"/>
<dbReference type="Orphanet" id="85414">
    <property type="disease" value="Systemic-onset juvenile idiopathic arthritis"/>
</dbReference>
<dbReference type="PharmGKB" id="PA147358522"/>
<dbReference type="VEuPathDB" id="HostDB:ENSG00000179630"/>
<dbReference type="eggNOG" id="ENOG502QUMA">
    <property type="taxonomic scope" value="Eukaryota"/>
</dbReference>
<dbReference type="GeneTree" id="ENSGT00390000000693"/>
<dbReference type="HOGENOM" id="CLU_637703_0_0_1"/>
<dbReference type="InParanoid" id="Q8IV20"/>
<dbReference type="OMA" id="HDNCELE"/>
<dbReference type="OrthoDB" id="10055554at2759"/>
<dbReference type="PAN-GO" id="Q8IV20">
    <property type="GO annotations" value="1 GO annotation based on evolutionary models"/>
</dbReference>
<dbReference type="PhylomeDB" id="Q8IV20"/>
<dbReference type="TreeFam" id="TF328389"/>
<dbReference type="PathwayCommons" id="Q8IV20"/>
<dbReference type="SABIO-RK" id="Q8IV20"/>
<dbReference type="SignaLink" id="Q8IV20"/>
<dbReference type="BioGRID-ORCS" id="144811">
    <property type="hits" value="16 hits in 1140 CRISPR screens"/>
</dbReference>
<dbReference type="GenomeRNAi" id="144811"/>
<dbReference type="Pharos" id="Q8IV20">
    <property type="development level" value="Tbio"/>
</dbReference>
<dbReference type="PRO" id="PR:Q8IV20"/>
<dbReference type="Proteomes" id="UP000005640">
    <property type="component" value="Chromosome 13"/>
</dbReference>
<dbReference type="RNAct" id="Q8IV20">
    <property type="molecule type" value="protein"/>
</dbReference>
<dbReference type="Bgee" id="ENSG00000179630">
    <property type="expression patterns" value="Expressed in corpus callosum and 174 other cell types or tissues"/>
</dbReference>
<dbReference type="ExpressionAtlas" id="Q8IV20">
    <property type="expression patterns" value="baseline and differential"/>
</dbReference>
<dbReference type="GO" id="GO:0005783">
    <property type="term" value="C:endoplasmic reticulum"/>
    <property type="evidence" value="ECO:0000314"/>
    <property type="project" value="UniProtKB"/>
</dbReference>
<dbReference type="GO" id="GO:0005634">
    <property type="term" value="C:nucleus"/>
    <property type="evidence" value="ECO:0000250"/>
    <property type="project" value="UniProtKB"/>
</dbReference>
<dbReference type="GO" id="GO:0005777">
    <property type="term" value="C:peroxisome"/>
    <property type="evidence" value="ECO:0000314"/>
    <property type="project" value="UniProtKB"/>
</dbReference>
<dbReference type="GO" id="GO:0004000">
    <property type="term" value="F:adenosine deaminase activity"/>
    <property type="evidence" value="ECO:0000314"/>
    <property type="project" value="UniProtKB"/>
</dbReference>
<dbReference type="GO" id="GO:0005507">
    <property type="term" value="F:copper ion binding"/>
    <property type="evidence" value="ECO:0000318"/>
    <property type="project" value="GO_Central"/>
</dbReference>
<dbReference type="GO" id="GO:0047975">
    <property type="term" value="F:guanosine phosphorylase activity"/>
    <property type="evidence" value="ECO:0000314"/>
    <property type="project" value="UniProtKB"/>
</dbReference>
<dbReference type="GO" id="GO:0004731">
    <property type="term" value="F:purine-nucleoside phosphorylase activity"/>
    <property type="evidence" value="ECO:0000314"/>
    <property type="project" value="UniProtKB"/>
</dbReference>
<dbReference type="GO" id="GO:0017061">
    <property type="term" value="F:S-methyl-5-thioadenosine phosphorylase activity"/>
    <property type="evidence" value="ECO:0000314"/>
    <property type="project" value="UniProtKB"/>
</dbReference>
<dbReference type="GO" id="GO:0006954">
    <property type="term" value="P:inflammatory response"/>
    <property type="evidence" value="ECO:0007669"/>
    <property type="project" value="UniProtKB-KW"/>
</dbReference>
<dbReference type="GO" id="GO:0045087">
    <property type="term" value="P:innate immune response"/>
    <property type="evidence" value="ECO:0007669"/>
    <property type="project" value="UniProtKB-KW"/>
</dbReference>
<dbReference type="GO" id="GO:0070431">
    <property type="term" value="P:nucleotide-binding oligomerization domain containing 2 signaling pathway"/>
    <property type="evidence" value="ECO:0000314"/>
    <property type="project" value="UniProtKB"/>
</dbReference>
<dbReference type="GO" id="GO:0002221">
    <property type="term" value="P:pattern recognition receptor signaling pathway"/>
    <property type="evidence" value="ECO:0000314"/>
    <property type="project" value="UniProtKB"/>
</dbReference>
<dbReference type="GO" id="GO:0002720">
    <property type="term" value="P:positive regulation of cytokine production involved in immune response"/>
    <property type="evidence" value="ECO:0000314"/>
    <property type="project" value="UniProtKB"/>
</dbReference>
<dbReference type="GO" id="GO:0030641">
    <property type="term" value="P:regulation of cellular pH"/>
    <property type="evidence" value="ECO:0000314"/>
    <property type="project" value="UniProtKB"/>
</dbReference>
<dbReference type="GO" id="GO:0050727">
    <property type="term" value="P:regulation of inflammatory response"/>
    <property type="evidence" value="ECO:0000250"/>
    <property type="project" value="UniProtKB"/>
</dbReference>
<dbReference type="GO" id="GO:1900542">
    <property type="term" value="P:regulation of purine nucleotide metabolic process"/>
    <property type="evidence" value="ECO:0000250"/>
    <property type="project" value="UniProtKB"/>
</dbReference>
<dbReference type="CDD" id="cd16833">
    <property type="entry name" value="YfiH"/>
    <property type="match status" value="1"/>
</dbReference>
<dbReference type="FunFam" id="3.60.140.10:FF:000002">
    <property type="entry name" value="Laccase (multicopper oxidoreductase) domain-containing 1"/>
    <property type="match status" value="1"/>
</dbReference>
<dbReference type="Gene3D" id="3.60.140.10">
    <property type="entry name" value="CNF1/YfiH-like putative cysteine hydrolases"/>
    <property type="match status" value="1"/>
</dbReference>
<dbReference type="InterPro" id="IPR003730">
    <property type="entry name" value="Cu_polyphenol_OxRdtase"/>
</dbReference>
<dbReference type="InterPro" id="IPR038371">
    <property type="entry name" value="Cu_polyphenol_OxRdtase_sf"/>
</dbReference>
<dbReference type="InterPro" id="IPR011324">
    <property type="entry name" value="Cytotoxic_necrot_fac-like_cat"/>
</dbReference>
<dbReference type="PANTHER" id="PTHR30616:SF2">
    <property type="entry name" value="PURINE NUCLEOSIDE PHOSPHORYLASE LACC1"/>
    <property type="match status" value="1"/>
</dbReference>
<dbReference type="PANTHER" id="PTHR30616">
    <property type="entry name" value="UNCHARACTERIZED PROTEIN YFIH"/>
    <property type="match status" value="1"/>
</dbReference>
<dbReference type="Pfam" id="PF02578">
    <property type="entry name" value="Cu-oxidase_4"/>
    <property type="match status" value="1"/>
</dbReference>
<dbReference type="SUPFAM" id="SSF64438">
    <property type="entry name" value="CNF1/YfiH-like putative cysteine hydrolases"/>
    <property type="match status" value="1"/>
</dbReference>
<evidence type="ECO:0000250" key="1">
    <source>
        <dbReference type="UniProtKB" id="P84138"/>
    </source>
</evidence>
<evidence type="ECO:0000250" key="2">
    <source>
        <dbReference type="UniProtKB" id="Q8BZT9"/>
    </source>
</evidence>
<evidence type="ECO:0000269" key="3">
    <source>
    </source>
</evidence>
<evidence type="ECO:0000269" key="4">
    <source>
    </source>
</evidence>
<evidence type="ECO:0000269" key="5">
    <source>
    </source>
</evidence>
<evidence type="ECO:0000269" key="6">
    <source>
    </source>
</evidence>
<evidence type="ECO:0000269" key="7">
    <source>
    </source>
</evidence>
<evidence type="ECO:0000269" key="8">
    <source>
    </source>
</evidence>
<evidence type="ECO:0000269" key="9">
    <source>
    </source>
</evidence>
<evidence type="ECO:0000269" key="10">
    <source>
    </source>
</evidence>
<evidence type="ECO:0000269" key="11">
    <source>
    </source>
</evidence>
<evidence type="ECO:0000269" key="12">
    <source>
    </source>
</evidence>
<evidence type="ECO:0000269" key="13">
    <source>
    </source>
</evidence>
<evidence type="ECO:0000303" key="14">
    <source>
    </source>
</evidence>
<evidence type="ECO:0000303" key="15">
    <source>
    </source>
</evidence>
<evidence type="ECO:0000303" key="16">
    <source>
    </source>
</evidence>
<evidence type="ECO:0000305" key="17"/>
<evidence type="ECO:0000305" key="18">
    <source>
    </source>
</evidence>
<evidence type="ECO:0000312" key="19">
    <source>
        <dbReference type="HGNC" id="HGNC:26789"/>
    </source>
</evidence>
<feature type="chain" id="PRO_0000163187" description="Purine nucleoside phosphorylase LACC1">
    <location>
        <begin position="1"/>
        <end position="430"/>
    </location>
</feature>
<feature type="binding site" evidence="1">
    <location>
        <position position="250"/>
    </location>
    <ligand>
        <name>Zn(2+)</name>
        <dbReference type="ChEBI" id="CHEBI:29105"/>
        <note>catalytic</note>
    </ligand>
</feature>
<feature type="binding site" evidence="1">
    <location>
        <position position="284"/>
    </location>
    <ligand>
        <name>Zn(2+)</name>
        <dbReference type="ChEBI" id="CHEBI:29105"/>
        <note>catalytic</note>
    </ligand>
</feature>
<feature type="binding site" evidence="1">
    <location>
        <position position="301"/>
    </location>
    <ligand>
        <name>Zn(2+)</name>
        <dbReference type="ChEBI" id="CHEBI:29105"/>
        <note>catalytic</note>
    </ligand>
</feature>
<feature type="modified residue" description="N6-acetyllysine" evidence="18">
    <location>
        <position position="247"/>
    </location>
</feature>
<feature type="sequence variant" id="VAR_052943" description="May influence susceptibility to juvenile rheumatoid arthritis; increased adenosine deaminase activity and decreased adenosine phosphorylase activity; reduced ability to promote pattern recognition receptor (PRR)-induced cytokines; reduced NOD2-induced signaling; does not change interaction with FASN; dbSNP:rs3764147." evidence="3 5 8 9 12 13">
    <original>I</original>
    <variation>V</variation>
    <location>
        <position position="254"/>
    </location>
</feature>
<feature type="sequence variant" id="VAR_083278" description="In JUVAR; uncertain significance." evidence="11">
    <original>A</original>
    <variation>P</variation>
    <location>
        <position position="278"/>
    </location>
</feature>
<feature type="sequence variant" id="VAR_073274" description="In JUVAR; reduced NOD2-induced signaling; dbSNP:rs730880295." evidence="4 12">
    <original>C</original>
    <variation>R</variation>
    <location>
        <position position="284"/>
    </location>
</feature>
<feature type="sequence variant" id="VAR_083279" description="In JUVAR; uncertain significance." evidence="9">
    <location>
        <begin position="414"/>
        <end position="430"/>
    </location>
</feature>
<feature type="mutagenesis site" description="Does not affect ability to promote pattern recognition receptor (PRR)-induced cytokines in macrophages; when associated with A-89 and A-265." evidence="8">
    <original>Y</original>
    <variation>A</variation>
    <location>
        <position position="52"/>
    </location>
</feature>
<feature type="mutagenesis site" description="Does not affect ability to promote pattern recognition receptor (PRR)-induced cytokines in macrophages; when associated with A-52 and A-265." evidence="8">
    <original>Y</original>
    <variation>A</variation>
    <location>
        <position position="89"/>
    </location>
</feature>
<feature type="mutagenesis site" description="Decreased acetylation; does not affect ability to promote pattern recognition receptor (PRR)-induced cytokines in macrophages." evidence="8">
    <original>K</original>
    <variation>A</variation>
    <location>
        <position position="247"/>
    </location>
</feature>
<feature type="mutagenesis site" description="Impaired ability to promote pattern recognition receptor (PRR)-induced cytokines in macrophages." evidence="8">
    <original>HH</original>
    <variation>AA</variation>
    <location>
        <begin position="249"/>
        <end position="250"/>
    </location>
</feature>
<feature type="mutagenesis site" description="Does not affect ability to promote pattern recognition receptor (PRR)-induced cytokines in macrophages; when associated with A-52 and A-89." evidence="8">
    <original>Y</original>
    <variation>A</variation>
    <location>
        <position position="265"/>
    </location>
</feature>
<proteinExistence type="evidence at protein level"/>
<reference key="1">
    <citation type="journal article" date="2004" name="Nat. Genet.">
        <title>Complete sequencing and characterization of 21,243 full-length human cDNAs.</title>
        <authorList>
            <person name="Ota T."/>
            <person name="Suzuki Y."/>
            <person name="Nishikawa T."/>
            <person name="Otsuki T."/>
            <person name="Sugiyama T."/>
            <person name="Irie R."/>
            <person name="Wakamatsu A."/>
            <person name="Hayashi K."/>
            <person name="Sato H."/>
            <person name="Nagai K."/>
            <person name="Kimura K."/>
            <person name="Makita H."/>
            <person name="Sekine M."/>
            <person name="Obayashi M."/>
            <person name="Nishi T."/>
            <person name="Shibahara T."/>
            <person name="Tanaka T."/>
            <person name="Ishii S."/>
            <person name="Yamamoto J."/>
            <person name="Saito K."/>
            <person name="Kawai Y."/>
            <person name="Isono Y."/>
            <person name="Nakamura Y."/>
            <person name="Nagahari K."/>
            <person name="Murakami K."/>
            <person name="Yasuda T."/>
            <person name="Iwayanagi T."/>
            <person name="Wagatsuma M."/>
            <person name="Shiratori A."/>
            <person name="Sudo H."/>
            <person name="Hosoiri T."/>
            <person name="Kaku Y."/>
            <person name="Kodaira H."/>
            <person name="Kondo H."/>
            <person name="Sugawara M."/>
            <person name="Takahashi M."/>
            <person name="Kanda K."/>
            <person name="Yokoi T."/>
            <person name="Furuya T."/>
            <person name="Kikkawa E."/>
            <person name="Omura Y."/>
            <person name="Abe K."/>
            <person name="Kamihara K."/>
            <person name="Katsuta N."/>
            <person name="Sato K."/>
            <person name="Tanikawa M."/>
            <person name="Yamazaki M."/>
            <person name="Ninomiya K."/>
            <person name="Ishibashi T."/>
            <person name="Yamashita H."/>
            <person name="Murakawa K."/>
            <person name="Fujimori K."/>
            <person name="Tanai H."/>
            <person name="Kimata M."/>
            <person name="Watanabe M."/>
            <person name="Hiraoka S."/>
            <person name="Chiba Y."/>
            <person name="Ishida S."/>
            <person name="Ono Y."/>
            <person name="Takiguchi S."/>
            <person name="Watanabe S."/>
            <person name="Yosida M."/>
            <person name="Hotuta T."/>
            <person name="Kusano J."/>
            <person name="Kanehori K."/>
            <person name="Takahashi-Fujii A."/>
            <person name="Hara H."/>
            <person name="Tanase T.-O."/>
            <person name="Nomura Y."/>
            <person name="Togiya S."/>
            <person name="Komai F."/>
            <person name="Hara R."/>
            <person name="Takeuchi K."/>
            <person name="Arita M."/>
            <person name="Imose N."/>
            <person name="Musashino K."/>
            <person name="Yuuki H."/>
            <person name="Oshima A."/>
            <person name="Sasaki N."/>
            <person name="Aotsuka S."/>
            <person name="Yoshikawa Y."/>
            <person name="Matsunawa H."/>
            <person name="Ichihara T."/>
            <person name="Shiohata N."/>
            <person name="Sano S."/>
            <person name="Moriya S."/>
            <person name="Momiyama H."/>
            <person name="Satoh N."/>
            <person name="Takami S."/>
            <person name="Terashima Y."/>
            <person name="Suzuki O."/>
            <person name="Nakagawa S."/>
            <person name="Senoh A."/>
            <person name="Mizoguchi H."/>
            <person name="Goto Y."/>
            <person name="Shimizu F."/>
            <person name="Wakebe H."/>
            <person name="Hishigaki H."/>
            <person name="Watanabe T."/>
            <person name="Sugiyama A."/>
            <person name="Takemoto M."/>
            <person name="Kawakami B."/>
            <person name="Yamazaki M."/>
            <person name="Watanabe K."/>
            <person name="Kumagai A."/>
            <person name="Itakura S."/>
            <person name="Fukuzumi Y."/>
            <person name="Fujimori Y."/>
            <person name="Komiyama M."/>
            <person name="Tashiro H."/>
            <person name="Tanigami A."/>
            <person name="Fujiwara T."/>
            <person name="Ono T."/>
            <person name="Yamada K."/>
            <person name="Fujii Y."/>
            <person name="Ozaki K."/>
            <person name="Hirao M."/>
            <person name="Ohmori Y."/>
            <person name="Kawabata A."/>
            <person name="Hikiji T."/>
            <person name="Kobatake N."/>
            <person name="Inagaki H."/>
            <person name="Ikema Y."/>
            <person name="Okamoto S."/>
            <person name="Okitani R."/>
            <person name="Kawakami T."/>
            <person name="Noguchi S."/>
            <person name="Itoh T."/>
            <person name="Shigeta K."/>
            <person name="Senba T."/>
            <person name="Matsumura K."/>
            <person name="Nakajima Y."/>
            <person name="Mizuno T."/>
            <person name="Morinaga M."/>
            <person name="Sasaki M."/>
            <person name="Togashi T."/>
            <person name="Oyama M."/>
            <person name="Hata H."/>
            <person name="Watanabe M."/>
            <person name="Komatsu T."/>
            <person name="Mizushima-Sugano J."/>
            <person name="Satoh T."/>
            <person name="Shirai Y."/>
            <person name="Takahashi Y."/>
            <person name="Nakagawa K."/>
            <person name="Okumura K."/>
            <person name="Nagase T."/>
            <person name="Nomura N."/>
            <person name="Kikuchi H."/>
            <person name="Masuho Y."/>
            <person name="Yamashita R."/>
            <person name="Nakai K."/>
            <person name="Yada T."/>
            <person name="Nakamura Y."/>
            <person name="Ohara O."/>
            <person name="Isogai T."/>
            <person name="Sugano S."/>
        </authorList>
    </citation>
    <scope>NUCLEOTIDE SEQUENCE [LARGE SCALE MRNA]</scope>
    <scope>VARIANT VAL-254</scope>
    <source>
        <tissue>Kidney</tissue>
    </source>
</reference>
<reference key="2">
    <citation type="journal article" date="2004" name="Nature">
        <title>The DNA sequence and analysis of human chromosome 13.</title>
        <authorList>
            <person name="Dunham A."/>
            <person name="Matthews L.H."/>
            <person name="Burton J."/>
            <person name="Ashurst J.L."/>
            <person name="Howe K.L."/>
            <person name="Ashcroft K.J."/>
            <person name="Beare D.M."/>
            <person name="Burford D.C."/>
            <person name="Hunt S.E."/>
            <person name="Griffiths-Jones S."/>
            <person name="Jones M.C."/>
            <person name="Keenan S.J."/>
            <person name="Oliver K."/>
            <person name="Scott C.E."/>
            <person name="Ainscough R."/>
            <person name="Almeida J.P."/>
            <person name="Ambrose K.D."/>
            <person name="Andrews D.T."/>
            <person name="Ashwell R.I.S."/>
            <person name="Babbage A.K."/>
            <person name="Bagguley C.L."/>
            <person name="Bailey J."/>
            <person name="Bannerjee R."/>
            <person name="Barlow K.F."/>
            <person name="Bates K."/>
            <person name="Beasley H."/>
            <person name="Bird C.P."/>
            <person name="Bray-Allen S."/>
            <person name="Brown A.J."/>
            <person name="Brown J.Y."/>
            <person name="Burrill W."/>
            <person name="Carder C."/>
            <person name="Carter N.P."/>
            <person name="Chapman J.C."/>
            <person name="Clamp M.E."/>
            <person name="Clark S.Y."/>
            <person name="Clarke G."/>
            <person name="Clee C.M."/>
            <person name="Clegg S.C."/>
            <person name="Cobley V."/>
            <person name="Collins J.E."/>
            <person name="Corby N."/>
            <person name="Coville G.J."/>
            <person name="Deloukas P."/>
            <person name="Dhami P."/>
            <person name="Dunham I."/>
            <person name="Dunn M."/>
            <person name="Earthrowl M.E."/>
            <person name="Ellington A.G."/>
            <person name="Faulkner L."/>
            <person name="Frankish A.G."/>
            <person name="Frankland J."/>
            <person name="French L."/>
            <person name="Garner P."/>
            <person name="Garnett J."/>
            <person name="Gilbert J.G.R."/>
            <person name="Gilson C.J."/>
            <person name="Ghori J."/>
            <person name="Grafham D.V."/>
            <person name="Gribble S.M."/>
            <person name="Griffiths C."/>
            <person name="Hall R.E."/>
            <person name="Hammond S."/>
            <person name="Harley J.L."/>
            <person name="Hart E.A."/>
            <person name="Heath P.D."/>
            <person name="Howden P.J."/>
            <person name="Huckle E.J."/>
            <person name="Hunt P.J."/>
            <person name="Hunt A.R."/>
            <person name="Johnson C."/>
            <person name="Johnson D."/>
            <person name="Kay M."/>
            <person name="Kimberley A.M."/>
            <person name="King A."/>
            <person name="Laird G.K."/>
            <person name="Langford C.J."/>
            <person name="Lawlor S."/>
            <person name="Leongamornlert D.A."/>
            <person name="Lloyd D.M."/>
            <person name="Lloyd C."/>
            <person name="Loveland J.E."/>
            <person name="Lovell J."/>
            <person name="Martin S."/>
            <person name="Mashreghi-Mohammadi M."/>
            <person name="McLaren S.J."/>
            <person name="McMurray A."/>
            <person name="Milne S."/>
            <person name="Moore M.J.F."/>
            <person name="Nickerson T."/>
            <person name="Palmer S.A."/>
            <person name="Pearce A.V."/>
            <person name="Peck A.I."/>
            <person name="Pelan S."/>
            <person name="Phillimore B."/>
            <person name="Porter K.M."/>
            <person name="Rice C.M."/>
            <person name="Searle S."/>
            <person name="Sehra H.K."/>
            <person name="Shownkeen R."/>
            <person name="Skuce C.D."/>
            <person name="Smith M."/>
            <person name="Steward C.A."/>
            <person name="Sycamore N."/>
            <person name="Tester J."/>
            <person name="Thomas D.W."/>
            <person name="Tracey A."/>
            <person name="Tromans A."/>
            <person name="Tubby B."/>
            <person name="Wall M."/>
            <person name="Wallis J.M."/>
            <person name="West A.P."/>
            <person name="Whitehead S.L."/>
            <person name="Willey D.L."/>
            <person name="Wilming L."/>
            <person name="Wray P.W."/>
            <person name="Wright M.W."/>
            <person name="Young L."/>
            <person name="Coulson A."/>
            <person name="Durbin R.M."/>
            <person name="Hubbard T."/>
            <person name="Sulston J.E."/>
            <person name="Beck S."/>
            <person name="Bentley D.R."/>
            <person name="Rogers J."/>
            <person name="Ross M.T."/>
        </authorList>
    </citation>
    <scope>NUCLEOTIDE SEQUENCE [LARGE SCALE GENOMIC DNA]</scope>
</reference>
<reference key="3">
    <citation type="submission" date="2005-07" db="EMBL/GenBank/DDBJ databases">
        <authorList>
            <person name="Mural R.J."/>
            <person name="Istrail S."/>
            <person name="Sutton G.G."/>
            <person name="Florea L."/>
            <person name="Halpern A.L."/>
            <person name="Mobarry C.M."/>
            <person name="Lippert R."/>
            <person name="Walenz B."/>
            <person name="Shatkay H."/>
            <person name="Dew I."/>
            <person name="Miller J.R."/>
            <person name="Flanigan M.J."/>
            <person name="Edwards N.J."/>
            <person name="Bolanos R."/>
            <person name="Fasulo D."/>
            <person name="Halldorsson B.V."/>
            <person name="Hannenhalli S."/>
            <person name="Turner R."/>
            <person name="Yooseph S."/>
            <person name="Lu F."/>
            <person name="Nusskern D.R."/>
            <person name="Shue B.C."/>
            <person name="Zheng X.H."/>
            <person name="Zhong F."/>
            <person name="Delcher A.L."/>
            <person name="Huson D.H."/>
            <person name="Kravitz S.A."/>
            <person name="Mouchard L."/>
            <person name="Reinert K."/>
            <person name="Remington K.A."/>
            <person name="Clark A.G."/>
            <person name="Waterman M.S."/>
            <person name="Eichler E.E."/>
            <person name="Adams M.D."/>
            <person name="Hunkapiller M.W."/>
            <person name="Myers E.W."/>
            <person name="Venter J.C."/>
        </authorList>
    </citation>
    <scope>NUCLEOTIDE SEQUENCE [LARGE SCALE GENOMIC DNA]</scope>
</reference>
<reference key="4">
    <citation type="journal article" date="2004" name="Genome Res.">
        <title>The status, quality, and expansion of the NIH full-length cDNA project: the Mammalian Gene Collection (MGC).</title>
        <authorList>
            <consortium name="The MGC Project Team"/>
        </authorList>
    </citation>
    <scope>NUCLEOTIDE SEQUENCE [LARGE SCALE MRNA]</scope>
    <source>
        <tissue>Pancreas</tissue>
    </source>
</reference>
<reference key="5">
    <citation type="journal article" date="2015" name="Arthritis Rheum.">
        <title>Association of a mutation in LACC1 with a monogenic form of systemic juvenile idiopathic arthritis.</title>
        <authorList>
            <person name="Wakil S.M."/>
            <person name="Monies D.M."/>
            <person name="Abouelhoda M."/>
            <person name="Al-Tassan N."/>
            <person name="Al-Dusery H."/>
            <person name="Naim E.A."/>
            <person name="Al-Younes B."/>
            <person name="Shinwari J."/>
            <person name="Al-Mohanna F.A."/>
            <person name="Meyer B.F."/>
            <person name="Al-Mayouf S."/>
        </authorList>
    </citation>
    <scope>INVOLVEMENT IN JUVAR</scope>
    <scope>VARIANT JUVAR ARG-284</scope>
</reference>
<reference key="6">
    <citation type="journal article" date="2016" name="Nat. Immunol.">
        <title>C13orf31 (FAMIN) is a central regulator of immunometabolic function.</title>
        <authorList>
            <person name="Cader M.Z."/>
            <person name="Boroviak K."/>
            <person name="Zhang Q."/>
            <person name="Assadi G."/>
            <person name="Kempster S.L."/>
            <person name="Sewell G.W."/>
            <person name="Saveljeva S."/>
            <person name="Ashcroft J.W."/>
            <person name="Clare S."/>
            <person name="Mukhopadhyay S."/>
            <person name="Brown K.P."/>
            <person name="Tschurtschenthaler M."/>
            <person name="Raine T."/>
            <person name="Doe B."/>
            <person name="Chilvers E.R."/>
            <person name="Griffin J.L."/>
            <person name="Kaneider N.C."/>
            <person name="Floto R.A."/>
            <person name="D'Amato M."/>
            <person name="Bradley A."/>
            <person name="Wakelam M.J."/>
            <person name="Dougan G."/>
            <person name="Kaser A."/>
        </authorList>
    </citation>
    <scope>SUBCELLULAR LOCATION</scope>
    <scope>INTERACTION WITH FASN</scope>
    <scope>CHARACTERIZATION OF VARIANT VAL-254</scope>
</reference>
<reference key="7">
    <citation type="journal article" date="2016" name="PLoS ONE">
        <title>Functional Analyses of the Crohn's Disease Risk Gene LACC1.</title>
        <authorList>
            <person name="Assadi G."/>
            <person name="Vesterlund L."/>
            <person name="Bonfiglio F."/>
            <person name="Mazzurana L."/>
            <person name="Cordeddu L."/>
            <person name="Schepis D."/>
            <person name="Mjoesberg J."/>
            <person name="Ruhrmann S."/>
            <person name="Fabbri A."/>
            <person name="Vukojevic V."/>
            <person name="Percipalle P."/>
            <person name="Salomons F.A."/>
            <person name="Laurencikiene J."/>
            <person name="Toerkvist L."/>
            <person name="Halfvarson J."/>
            <person name="D'Amato M."/>
        </authorList>
    </citation>
    <scope>FUNCTION</scope>
    <scope>SUBCELLULAR LOCATION</scope>
    <scope>TISSUE SPECIFICITY</scope>
    <scope>INDUCTION</scope>
</reference>
<reference key="8">
    <citation type="journal article" date="2016" name="Pediatr. Rheumatol. Online J.">
        <title>Juvenile arthritis caused by a novel FAMIN (LACC1) mutation in two children with systemic and extended oligoarticular course.</title>
        <authorList>
            <person name="Kallinich T."/>
            <person name="Thorwarth A."/>
            <person name="von Stuckrad S.L."/>
            <person name="Roesen-Wolff A."/>
            <person name="Luksch H."/>
            <person name="Hundsdoerfer P."/>
            <person name="Minden K."/>
            <person name="Krawitz P."/>
        </authorList>
    </citation>
    <scope>INVOLVEMENT IN JUVAR</scope>
</reference>
<reference key="9">
    <citation type="journal article" date="2017" name="Nat. Commun.">
        <title>Human LACC1 increases innate receptor-induced responses and a LACC1 disease-risk variant modulates these outcomes.</title>
        <authorList>
            <person name="Lahiri A."/>
            <person name="Hedl M."/>
            <person name="Yan J."/>
            <person name="Abraham C."/>
        </authorList>
    </citation>
    <scope>FUNCTION</scope>
    <scope>INTERACTION WITH SDHA</scope>
    <scope>PHOSPHORYLATION</scope>
    <scope>ACETYLATION AT LYS-247</scope>
    <scope>TISSUE SPECIFICITY</scope>
    <scope>INDUCTION</scope>
    <scope>CHARACTERIZATION OF VARIANT VAL-254</scope>
    <scope>MUTAGENESIS OF TYR-52; TYR-89; LYS-247; 249-HIS-HIS-250 AND TYR-265</scope>
</reference>
<reference key="10">
    <citation type="journal article" date="2018" name="J. Rheumatol.">
        <title>LACC1 gene defects in familial form of juvenile arthritis.</title>
        <authorList>
            <person name="Karacan I."/>
            <person name="Ugurlu S."/>
            <person name="Sahin S."/>
            <person name="Everest E."/>
            <person name="Kasapcopur O."/>
            <person name="Tolun A."/>
            <person name="Oezdogan H."/>
            <person name="Turanli E.T."/>
        </authorList>
    </citation>
    <scope>INVOLVEMENT IN JUVAR</scope>
    <scope>VARIANT VAL-254</scope>
    <scope>VARIANT JUVAR 414-ARG--GLU-430 DEL</scope>
</reference>
<reference key="11">
    <citation type="journal article" date="2020" name="Ann. Rheum. Dis.">
        <title>LACC1 gene mutation in three sisters with polyarthritis without systemic features.</title>
        <authorList>
            <person name="Singh A."/>
            <person name="Suri D."/>
            <person name="Vignesh P."/>
            <person name="Anjani G."/>
            <person name="Jacob P."/>
            <person name="Girisha K.M."/>
        </authorList>
    </citation>
    <scope>INVOLVEMENT IN JUVAR</scope>
    <scope>VARIANT JUVAR PRO-278</scope>
</reference>
<reference key="12">
    <citation type="journal article" date="2019" name="Sci. Rep.">
        <title>Biallelic loss-of-function LACC1/FAMIN mutations presenting as rheumatoid factor-negative polyarticular juvenile idiopathic arthritis.</title>
        <authorList>
            <person name="Rabionet R."/>
            <person name="Remesal A."/>
            <person name="Mensa-Vilaro A."/>
            <person name="Murias S."/>
            <person name="Alcobendas R."/>
            <person name="Gonzalez-Roca E."/>
            <person name="Ruiz-Ortiz E."/>
            <person name="Anton J."/>
            <person name="Iglesias E."/>
            <person name="Modesto C."/>
            <person name="Comas D."/>
            <person name="Puig A."/>
            <person name="Drechsel O."/>
            <person name="Ossowski S."/>
            <person name="Yaguee J."/>
            <person name="Merino R."/>
            <person name="Estivill X."/>
            <person name="Arostegui J.I."/>
        </authorList>
    </citation>
    <scope>INVOLVEMENT IN JUVAR</scope>
</reference>
<reference key="13">
    <citation type="journal article" date="2020" name="Cell">
        <title>FAMIN is a multifunctional purine enzyme enabling the purine nucleotide cycle.</title>
        <authorList>
            <person name="Cader M.Z."/>
            <person name="de Almeida Rodrigues R.P."/>
            <person name="West J.A."/>
            <person name="Sewell G.W."/>
            <person name="Md-Ibrahim M.N."/>
            <person name="Reikine S."/>
            <person name="Sirago G."/>
            <person name="Unger L.W."/>
            <person name="Inglesias-Romero A.B."/>
            <person name="Ramshorn K."/>
            <person name="Haag L.M."/>
            <person name="Saveljeva S."/>
            <person name="Ebel J.F."/>
            <person name="Rosenstiel P."/>
            <person name="Kaneider N.C."/>
            <person name="Lee J.C."/>
            <person name="Lawley T.D."/>
            <person name="Bradley A."/>
            <person name="Dougan G."/>
            <person name="Modis Y."/>
            <person name="Griffin J.L."/>
            <person name="Kaser A."/>
        </authorList>
    </citation>
    <scope>FUNCTION</scope>
    <scope>CATALYTIC ACTIVITY</scope>
    <scope>BIOPHYSICOCHEMICAL PROPERTIES</scope>
    <scope>CHARACTERIZATION OF VARIANT VAL-254</scope>
</reference>
<reference key="14">
    <citation type="journal article" date="2019" name="Cell Rep.">
        <title>LACC1 required for NOD2-induced, ER stress-mediated innate immune outcomes in human macrophages and LACC1 risk variants modulate these outcomes.</title>
        <authorList>
            <person name="Huang C."/>
            <person name="Hedl M."/>
            <person name="Ranjan K."/>
            <person name="Abraham C."/>
        </authorList>
    </citation>
    <scope>FUNCTION</scope>
    <scope>SUBCELLULAR LOCATION</scope>
    <scope>INTERACTION WITH ATF6; EIF2AK3 AND ERN1</scope>
    <scope>CHARACTERIZATION OF VARIANT VAL-254</scope>
    <scope>CHARACTERIZATION OF VARIANT JUVAR ARG-284</scope>
</reference>
<organism>
    <name type="scientific">Homo sapiens</name>
    <name type="common">Human</name>
    <dbReference type="NCBI Taxonomy" id="9606"/>
    <lineage>
        <taxon>Eukaryota</taxon>
        <taxon>Metazoa</taxon>
        <taxon>Chordata</taxon>
        <taxon>Craniata</taxon>
        <taxon>Vertebrata</taxon>
        <taxon>Euteleostomi</taxon>
        <taxon>Mammalia</taxon>
        <taxon>Eutheria</taxon>
        <taxon>Euarchontoglires</taxon>
        <taxon>Primates</taxon>
        <taxon>Haplorrhini</taxon>
        <taxon>Catarrhini</taxon>
        <taxon>Hominidae</taxon>
        <taxon>Homo</taxon>
    </lineage>
</organism>